<keyword id="KW-1185">Reference proteome</keyword>
<dbReference type="EMBL" id="AK124096">
    <property type="status" value="NOT_ANNOTATED_CDS"/>
    <property type="molecule type" value="mRNA"/>
</dbReference>
<dbReference type="BioMuta" id="-"/>
<dbReference type="DMDM" id="74712359"/>
<dbReference type="AGR" id="HGNC:51491"/>
<dbReference type="neXtProt" id="NX_Q6ZVU0"/>
<dbReference type="InParanoid" id="Q6ZVU0"/>
<dbReference type="PAN-GO" id="Q6ZVU0">
    <property type="GO annotations" value="0 GO annotations based on evolutionary models"/>
</dbReference>
<dbReference type="Pharos" id="Q6ZVU0">
    <property type="development level" value="Tdark"/>
</dbReference>
<dbReference type="Proteomes" id="UP000005640">
    <property type="component" value="Unplaced"/>
</dbReference>
<dbReference type="RNAct" id="Q6ZVU0">
    <property type="molecule type" value="protein"/>
</dbReference>
<name>YK022_HUMAN</name>
<reference key="1">
    <citation type="journal article" date="2004" name="Nat. Genet.">
        <title>Complete sequencing and characterization of 21,243 full-length human cDNAs.</title>
        <authorList>
            <person name="Ota T."/>
            <person name="Suzuki Y."/>
            <person name="Nishikawa T."/>
            <person name="Otsuki T."/>
            <person name="Sugiyama T."/>
            <person name="Irie R."/>
            <person name="Wakamatsu A."/>
            <person name="Hayashi K."/>
            <person name="Sato H."/>
            <person name="Nagai K."/>
            <person name="Kimura K."/>
            <person name="Makita H."/>
            <person name="Sekine M."/>
            <person name="Obayashi M."/>
            <person name="Nishi T."/>
            <person name="Shibahara T."/>
            <person name="Tanaka T."/>
            <person name="Ishii S."/>
            <person name="Yamamoto J."/>
            <person name="Saito K."/>
            <person name="Kawai Y."/>
            <person name="Isono Y."/>
            <person name="Nakamura Y."/>
            <person name="Nagahari K."/>
            <person name="Murakami K."/>
            <person name="Yasuda T."/>
            <person name="Iwayanagi T."/>
            <person name="Wagatsuma M."/>
            <person name="Shiratori A."/>
            <person name="Sudo H."/>
            <person name="Hosoiri T."/>
            <person name="Kaku Y."/>
            <person name="Kodaira H."/>
            <person name="Kondo H."/>
            <person name="Sugawara M."/>
            <person name="Takahashi M."/>
            <person name="Kanda K."/>
            <person name="Yokoi T."/>
            <person name="Furuya T."/>
            <person name="Kikkawa E."/>
            <person name="Omura Y."/>
            <person name="Abe K."/>
            <person name="Kamihara K."/>
            <person name="Katsuta N."/>
            <person name="Sato K."/>
            <person name="Tanikawa M."/>
            <person name="Yamazaki M."/>
            <person name="Ninomiya K."/>
            <person name="Ishibashi T."/>
            <person name="Yamashita H."/>
            <person name="Murakawa K."/>
            <person name="Fujimori K."/>
            <person name="Tanai H."/>
            <person name="Kimata M."/>
            <person name="Watanabe M."/>
            <person name="Hiraoka S."/>
            <person name="Chiba Y."/>
            <person name="Ishida S."/>
            <person name="Ono Y."/>
            <person name="Takiguchi S."/>
            <person name="Watanabe S."/>
            <person name="Yosida M."/>
            <person name="Hotuta T."/>
            <person name="Kusano J."/>
            <person name="Kanehori K."/>
            <person name="Takahashi-Fujii A."/>
            <person name="Hara H."/>
            <person name="Tanase T.-O."/>
            <person name="Nomura Y."/>
            <person name="Togiya S."/>
            <person name="Komai F."/>
            <person name="Hara R."/>
            <person name="Takeuchi K."/>
            <person name="Arita M."/>
            <person name="Imose N."/>
            <person name="Musashino K."/>
            <person name="Yuuki H."/>
            <person name="Oshima A."/>
            <person name="Sasaki N."/>
            <person name="Aotsuka S."/>
            <person name="Yoshikawa Y."/>
            <person name="Matsunawa H."/>
            <person name="Ichihara T."/>
            <person name="Shiohata N."/>
            <person name="Sano S."/>
            <person name="Moriya S."/>
            <person name="Momiyama H."/>
            <person name="Satoh N."/>
            <person name="Takami S."/>
            <person name="Terashima Y."/>
            <person name="Suzuki O."/>
            <person name="Nakagawa S."/>
            <person name="Senoh A."/>
            <person name="Mizoguchi H."/>
            <person name="Goto Y."/>
            <person name="Shimizu F."/>
            <person name="Wakebe H."/>
            <person name="Hishigaki H."/>
            <person name="Watanabe T."/>
            <person name="Sugiyama A."/>
            <person name="Takemoto M."/>
            <person name="Kawakami B."/>
            <person name="Yamazaki M."/>
            <person name="Watanabe K."/>
            <person name="Kumagai A."/>
            <person name="Itakura S."/>
            <person name="Fukuzumi Y."/>
            <person name="Fujimori Y."/>
            <person name="Komiyama M."/>
            <person name="Tashiro H."/>
            <person name="Tanigami A."/>
            <person name="Fujiwara T."/>
            <person name="Ono T."/>
            <person name="Yamada K."/>
            <person name="Fujii Y."/>
            <person name="Ozaki K."/>
            <person name="Hirao M."/>
            <person name="Ohmori Y."/>
            <person name="Kawabata A."/>
            <person name="Hikiji T."/>
            <person name="Kobatake N."/>
            <person name="Inagaki H."/>
            <person name="Ikema Y."/>
            <person name="Okamoto S."/>
            <person name="Okitani R."/>
            <person name="Kawakami T."/>
            <person name="Noguchi S."/>
            <person name="Itoh T."/>
            <person name="Shigeta K."/>
            <person name="Senba T."/>
            <person name="Matsumura K."/>
            <person name="Nakajima Y."/>
            <person name="Mizuno T."/>
            <person name="Morinaga M."/>
            <person name="Sasaki M."/>
            <person name="Togashi T."/>
            <person name="Oyama M."/>
            <person name="Hata H."/>
            <person name="Watanabe M."/>
            <person name="Komatsu T."/>
            <person name="Mizushima-Sugano J."/>
            <person name="Satoh T."/>
            <person name="Shirai Y."/>
            <person name="Takahashi Y."/>
            <person name="Nakagawa K."/>
            <person name="Okumura K."/>
            <person name="Nagase T."/>
            <person name="Nomura N."/>
            <person name="Kikuchi H."/>
            <person name="Masuho Y."/>
            <person name="Yamashita R."/>
            <person name="Nakai K."/>
            <person name="Yada T."/>
            <person name="Nakamura Y."/>
            <person name="Ohara O."/>
            <person name="Isogai T."/>
            <person name="Sugano S."/>
        </authorList>
    </citation>
    <scope>NUCLEOTIDE SEQUENCE [LARGE SCALE MRNA]</scope>
    <source>
        <tissue>Esophageal carcinoma</tissue>
    </source>
</reference>
<accession>Q6ZVU0</accession>
<feature type="chain" id="PRO_0000329051" description="Putative uncharacterized protein FLJ42102">
    <location>
        <begin position="1"/>
        <end position="165"/>
    </location>
</feature>
<comment type="caution">
    <text evidence="1">Product of a dubious CDS prediction. No homolog. May not code for a protein.</text>
</comment>
<organism>
    <name type="scientific">Homo sapiens</name>
    <name type="common">Human</name>
    <dbReference type="NCBI Taxonomy" id="9606"/>
    <lineage>
        <taxon>Eukaryota</taxon>
        <taxon>Metazoa</taxon>
        <taxon>Chordata</taxon>
        <taxon>Craniata</taxon>
        <taxon>Vertebrata</taxon>
        <taxon>Euteleostomi</taxon>
        <taxon>Mammalia</taxon>
        <taxon>Eutheria</taxon>
        <taxon>Euarchontoglires</taxon>
        <taxon>Primates</taxon>
        <taxon>Haplorrhini</taxon>
        <taxon>Catarrhini</taxon>
        <taxon>Hominidae</taxon>
        <taxon>Homo</taxon>
    </lineage>
</organism>
<evidence type="ECO:0000305" key="1"/>
<protein>
    <recommendedName>
        <fullName>Putative uncharacterized protein FLJ42102</fullName>
    </recommendedName>
</protein>
<proteinExistence type="uncertain"/>
<sequence>MVTKWWGQDPPVQLRSQLMLWIMELILWKFQSSVVGSSVVTWKISDVAGPHGDHSCSLQHLEQIIGSVSNYPRYTGSRSCDRGENPVSLSKRIKCTWMLGASGFPPRCPSGRDHSRDHPGKSQVPALELANQLAAWGLWSSVVKSWGFRAGETEAPISALSSAHA</sequence>